<keyword id="KW-1185">Reference proteome</keyword>
<keyword id="KW-0687">Ribonucleoprotein</keyword>
<keyword id="KW-0689">Ribosomal protein</keyword>
<keyword id="KW-0694">RNA-binding</keyword>
<keyword id="KW-0699">rRNA-binding</keyword>
<sequence>MQIILLEKVVNLGNLGDIVKVKDGYARNFLIPNKQARRATKEALAEFEVRRAELEKVAAEKLAAAQAQGEKLAGSTVQINQKAGVDGRLFGSVTNADIAEALVKQGFAVEKAQVRLPEGPLKLVGEHAVQISLHTDVLVDVTVAVIGEHV</sequence>
<name>RL9_PARXL</name>
<feature type="chain" id="PRO_0000258445" description="Large ribosomal subunit protein bL9">
    <location>
        <begin position="1"/>
        <end position="150"/>
    </location>
</feature>
<proteinExistence type="inferred from homology"/>
<accession>Q13ZG9</accession>
<organism>
    <name type="scientific">Paraburkholderia xenovorans (strain LB400)</name>
    <dbReference type="NCBI Taxonomy" id="266265"/>
    <lineage>
        <taxon>Bacteria</taxon>
        <taxon>Pseudomonadati</taxon>
        <taxon>Pseudomonadota</taxon>
        <taxon>Betaproteobacteria</taxon>
        <taxon>Burkholderiales</taxon>
        <taxon>Burkholderiaceae</taxon>
        <taxon>Paraburkholderia</taxon>
    </lineage>
</organism>
<protein>
    <recommendedName>
        <fullName evidence="1">Large ribosomal subunit protein bL9</fullName>
    </recommendedName>
    <alternativeName>
        <fullName evidence="2">50S ribosomal protein L9</fullName>
    </alternativeName>
</protein>
<reference key="1">
    <citation type="journal article" date="2006" name="Proc. Natl. Acad. Sci. U.S.A.">
        <title>Burkholderia xenovorans LB400 harbors a multi-replicon, 9.73-Mbp genome shaped for versatility.</title>
        <authorList>
            <person name="Chain P.S.G."/>
            <person name="Denef V.J."/>
            <person name="Konstantinidis K.T."/>
            <person name="Vergez L.M."/>
            <person name="Agullo L."/>
            <person name="Reyes V.L."/>
            <person name="Hauser L."/>
            <person name="Cordova M."/>
            <person name="Gomez L."/>
            <person name="Gonzalez M."/>
            <person name="Land M."/>
            <person name="Lao V."/>
            <person name="Larimer F."/>
            <person name="LiPuma J.J."/>
            <person name="Mahenthiralingam E."/>
            <person name="Malfatti S.A."/>
            <person name="Marx C.J."/>
            <person name="Parnell J.J."/>
            <person name="Ramette A."/>
            <person name="Richardson P."/>
            <person name="Seeger M."/>
            <person name="Smith D."/>
            <person name="Spilker T."/>
            <person name="Sul W.J."/>
            <person name="Tsoi T.V."/>
            <person name="Ulrich L.E."/>
            <person name="Zhulin I.B."/>
            <person name="Tiedje J.M."/>
        </authorList>
    </citation>
    <scope>NUCLEOTIDE SEQUENCE [LARGE SCALE GENOMIC DNA]</scope>
    <source>
        <strain>LB400</strain>
    </source>
</reference>
<comment type="function">
    <text evidence="1">Binds to the 23S rRNA.</text>
</comment>
<comment type="similarity">
    <text evidence="1">Belongs to the bacterial ribosomal protein bL9 family.</text>
</comment>
<evidence type="ECO:0000255" key="1">
    <source>
        <dbReference type="HAMAP-Rule" id="MF_00503"/>
    </source>
</evidence>
<evidence type="ECO:0000305" key="2"/>
<dbReference type="EMBL" id="CP000270">
    <property type="protein sequence ID" value="ABE30520.1"/>
    <property type="molecule type" value="Genomic_DNA"/>
</dbReference>
<dbReference type="RefSeq" id="WP_011488167.1">
    <property type="nucleotide sequence ID" value="NC_007951.1"/>
</dbReference>
<dbReference type="SMR" id="Q13ZG9"/>
<dbReference type="STRING" id="266265.Bxe_A2453"/>
<dbReference type="KEGG" id="bxb:DR64_145"/>
<dbReference type="KEGG" id="bxe:Bxe_A2453"/>
<dbReference type="PATRIC" id="fig|266265.5.peg.2078"/>
<dbReference type="eggNOG" id="COG0359">
    <property type="taxonomic scope" value="Bacteria"/>
</dbReference>
<dbReference type="OrthoDB" id="9788336at2"/>
<dbReference type="Proteomes" id="UP000001817">
    <property type="component" value="Chromosome 1"/>
</dbReference>
<dbReference type="GO" id="GO:1990904">
    <property type="term" value="C:ribonucleoprotein complex"/>
    <property type="evidence" value="ECO:0007669"/>
    <property type="project" value="UniProtKB-KW"/>
</dbReference>
<dbReference type="GO" id="GO:0005840">
    <property type="term" value="C:ribosome"/>
    <property type="evidence" value="ECO:0007669"/>
    <property type="project" value="UniProtKB-KW"/>
</dbReference>
<dbReference type="GO" id="GO:0019843">
    <property type="term" value="F:rRNA binding"/>
    <property type="evidence" value="ECO:0007669"/>
    <property type="project" value="UniProtKB-UniRule"/>
</dbReference>
<dbReference type="GO" id="GO:0003735">
    <property type="term" value="F:structural constituent of ribosome"/>
    <property type="evidence" value="ECO:0007669"/>
    <property type="project" value="InterPro"/>
</dbReference>
<dbReference type="GO" id="GO:0006412">
    <property type="term" value="P:translation"/>
    <property type="evidence" value="ECO:0007669"/>
    <property type="project" value="UniProtKB-UniRule"/>
</dbReference>
<dbReference type="Gene3D" id="3.10.430.100">
    <property type="entry name" value="Ribosomal protein L9, C-terminal domain"/>
    <property type="match status" value="1"/>
</dbReference>
<dbReference type="Gene3D" id="3.40.5.10">
    <property type="entry name" value="Ribosomal protein L9, N-terminal domain"/>
    <property type="match status" value="1"/>
</dbReference>
<dbReference type="HAMAP" id="MF_00503">
    <property type="entry name" value="Ribosomal_bL9"/>
    <property type="match status" value="1"/>
</dbReference>
<dbReference type="InterPro" id="IPR000244">
    <property type="entry name" value="Ribosomal_bL9"/>
</dbReference>
<dbReference type="InterPro" id="IPR009027">
    <property type="entry name" value="Ribosomal_bL9/RNase_H1_N"/>
</dbReference>
<dbReference type="InterPro" id="IPR020594">
    <property type="entry name" value="Ribosomal_bL9_bac/chp"/>
</dbReference>
<dbReference type="InterPro" id="IPR020069">
    <property type="entry name" value="Ribosomal_bL9_C"/>
</dbReference>
<dbReference type="InterPro" id="IPR036791">
    <property type="entry name" value="Ribosomal_bL9_C_sf"/>
</dbReference>
<dbReference type="InterPro" id="IPR020070">
    <property type="entry name" value="Ribosomal_bL9_N"/>
</dbReference>
<dbReference type="InterPro" id="IPR036935">
    <property type="entry name" value="Ribosomal_bL9_N_sf"/>
</dbReference>
<dbReference type="NCBIfam" id="TIGR00158">
    <property type="entry name" value="L9"/>
    <property type="match status" value="1"/>
</dbReference>
<dbReference type="PANTHER" id="PTHR21368">
    <property type="entry name" value="50S RIBOSOMAL PROTEIN L9"/>
    <property type="match status" value="1"/>
</dbReference>
<dbReference type="Pfam" id="PF03948">
    <property type="entry name" value="Ribosomal_L9_C"/>
    <property type="match status" value="1"/>
</dbReference>
<dbReference type="Pfam" id="PF01281">
    <property type="entry name" value="Ribosomal_L9_N"/>
    <property type="match status" value="1"/>
</dbReference>
<dbReference type="SUPFAM" id="SSF55658">
    <property type="entry name" value="L9 N-domain-like"/>
    <property type="match status" value="1"/>
</dbReference>
<dbReference type="SUPFAM" id="SSF55653">
    <property type="entry name" value="Ribosomal protein L9 C-domain"/>
    <property type="match status" value="1"/>
</dbReference>
<dbReference type="PROSITE" id="PS00651">
    <property type="entry name" value="RIBOSOMAL_L9"/>
    <property type="match status" value="1"/>
</dbReference>
<gene>
    <name evidence="1" type="primary">rplI</name>
    <name type="ordered locus">Bxeno_A1982</name>
    <name type="ORF">Bxe_A2453</name>
</gene>